<sequence length="52" mass="5398">MLTWSIIFLVVAIIAGLLGFGGIAGTATGIAKILFALFLILFVVSLLFGRTG</sequence>
<name>Y1098_AZOVD</name>
<proteinExistence type="inferred from homology"/>
<dbReference type="EMBL" id="CP001157">
    <property type="protein sequence ID" value="ACO77329.1"/>
    <property type="molecule type" value="Genomic_DNA"/>
</dbReference>
<dbReference type="RefSeq" id="WP_012699750.1">
    <property type="nucleotide sequence ID" value="NC_012560.1"/>
</dbReference>
<dbReference type="SMR" id="C1DP97"/>
<dbReference type="STRING" id="322710.Avin_10980"/>
<dbReference type="EnsemblBacteria" id="ACO77329">
    <property type="protein sequence ID" value="ACO77329"/>
    <property type="gene ID" value="Avin_10980"/>
</dbReference>
<dbReference type="GeneID" id="88188082"/>
<dbReference type="KEGG" id="avn:Avin_10980"/>
<dbReference type="eggNOG" id="COG5487">
    <property type="taxonomic scope" value="Bacteria"/>
</dbReference>
<dbReference type="HOGENOM" id="CLU_187346_2_1_6"/>
<dbReference type="Proteomes" id="UP000002424">
    <property type="component" value="Chromosome"/>
</dbReference>
<dbReference type="GO" id="GO:0005886">
    <property type="term" value="C:plasma membrane"/>
    <property type="evidence" value="ECO:0007669"/>
    <property type="project" value="UniProtKB-SubCell"/>
</dbReference>
<dbReference type="HAMAP" id="MF_01361">
    <property type="entry name" value="UPF0391"/>
    <property type="match status" value="1"/>
</dbReference>
<dbReference type="InterPro" id="IPR009760">
    <property type="entry name" value="DUF1328"/>
</dbReference>
<dbReference type="NCBIfam" id="NF010226">
    <property type="entry name" value="PRK13682.1-1"/>
    <property type="match status" value="1"/>
</dbReference>
<dbReference type="NCBIfam" id="NF010228">
    <property type="entry name" value="PRK13682.1-3"/>
    <property type="match status" value="1"/>
</dbReference>
<dbReference type="NCBIfam" id="NF010229">
    <property type="entry name" value="PRK13682.1-4"/>
    <property type="match status" value="1"/>
</dbReference>
<dbReference type="Pfam" id="PF07043">
    <property type="entry name" value="DUF1328"/>
    <property type="match status" value="1"/>
</dbReference>
<dbReference type="PIRSF" id="PIRSF036466">
    <property type="entry name" value="UCP036466"/>
    <property type="match status" value="1"/>
</dbReference>
<keyword id="KW-1003">Cell membrane</keyword>
<keyword id="KW-0472">Membrane</keyword>
<keyword id="KW-0812">Transmembrane</keyword>
<keyword id="KW-1133">Transmembrane helix</keyword>
<organism>
    <name type="scientific">Azotobacter vinelandii (strain DJ / ATCC BAA-1303)</name>
    <dbReference type="NCBI Taxonomy" id="322710"/>
    <lineage>
        <taxon>Bacteria</taxon>
        <taxon>Pseudomonadati</taxon>
        <taxon>Pseudomonadota</taxon>
        <taxon>Gammaproteobacteria</taxon>
        <taxon>Pseudomonadales</taxon>
        <taxon>Pseudomonadaceae</taxon>
        <taxon>Azotobacter</taxon>
    </lineage>
</organism>
<gene>
    <name type="ordered locus">Avin_10980</name>
</gene>
<reference key="1">
    <citation type="journal article" date="2009" name="J. Bacteriol.">
        <title>Genome sequence of Azotobacter vinelandii, an obligate aerobe specialized to support diverse anaerobic metabolic processes.</title>
        <authorList>
            <person name="Setubal J.C."/>
            <person name="Dos Santos P."/>
            <person name="Goldman B.S."/>
            <person name="Ertesvaag H."/>
            <person name="Espin G."/>
            <person name="Rubio L.M."/>
            <person name="Valla S."/>
            <person name="Almeida N.F."/>
            <person name="Balasubramanian D."/>
            <person name="Cromes L."/>
            <person name="Curatti L."/>
            <person name="Du Z."/>
            <person name="Godsy E."/>
            <person name="Goodner B."/>
            <person name="Hellner-Burris K."/>
            <person name="Hernandez J.A."/>
            <person name="Houmiel K."/>
            <person name="Imperial J."/>
            <person name="Kennedy C."/>
            <person name="Larson T.J."/>
            <person name="Latreille P."/>
            <person name="Ligon L.S."/>
            <person name="Lu J."/>
            <person name="Maerk M."/>
            <person name="Miller N.M."/>
            <person name="Norton S."/>
            <person name="O'Carroll I.P."/>
            <person name="Paulsen I."/>
            <person name="Raulfs E.C."/>
            <person name="Roemer R."/>
            <person name="Rosser J."/>
            <person name="Segura D."/>
            <person name="Slater S."/>
            <person name="Stricklin S.L."/>
            <person name="Studholme D.J."/>
            <person name="Sun J."/>
            <person name="Viana C.J."/>
            <person name="Wallin E."/>
            <person name="Wang B."/>
            <person name="Wheeler C."/>
            <person name="Zhu H."/>
            <person name="Dean D.R."/>
            <person name="Dixon R."/>
            <person name="Wood D."/>
        </authorList>
    </citation>
    <scope>NUCLEOTIDE SEQUENCE [LARGE SCALE GENOMIC DNA]</scope>
    <source>
        <strain>DJ / ATCC BAA-1303</strain>
    </source>
</reference>
<feature type="chain" id="PRO_1000214873" description="UPF0391 membrane protein Avin_10980">
    <location>
        <begin position="1"/>
        <end position="52"/>
    </location>
</feature>
<feature type="transmembrane region" description="Helical" evidence="1">
    <location>
        <begin position="4"/>
        <end position="24"/>
    </location>
</feature>
<feature type="transmembrane region" description="Helical" evidence="1">
    <location>
        <begin position="29"/>
        <end position="49"/>
    </location>
</feature>
<evidence type="ECO:0000255" key="1">
    <source>
        <dbReference type="HAMAP-Rule" id="MF_01361"/>
    </source>
</evidence>
<protein>
    <recommendedName>
        <fullName evidence="1">UPF0391 membrane protein Avin_10980</fullName>
    </recommendedName>
</protein>
<accession>C1DP97</accession>
<comment type="subcellular location">
    <subcellularLocation>
        <location evidence="1">Cell membrane</location>
        <topology evidence="1">Multi-pass membrane protein</topology>
    </subcellularLocation>
</comment>
<comment type="similarity">
    <text evidence="1">Belongs to the UPF0391 family.</text>
</comment>